<gene>
    <name type="ORF">GSVIVT00013434001</name>
</gene>
<protein>
    <recommendedName>
        <fullName>CASP-like protein 1C1</fullName>
        <shortName>VvCASPL1C1</shortName>
    </recommendedName>
</protein>
<evidence type="ECO:0000250" key="1"/>
<evidence type="ECO:0000255" key="2"/>
<evidence type="ECO:0000305" key="3"/>
<dbReference type="ExpressionAtlas" id="A7R333">
    <property type="expression patterns" value="baseline and differential"/>
</dbReference>
<dbReference type="GO" id="GO:0005886">
    <property type="term" value="C:plasma membrane"/>
    <property type="evidence" value="ECO:0007669"/>
    <property type="project" value="UniProtKB-SubCell"/>
</dbReference>
<dbReference type="InterPro" id="IPR006459">
    <property type="entry name" value="CASP/CASPL"/>
</dbReference>
<dbReference type="InterPro" id="IPR006702">
    <property type="entry name" value="CASP_dom"/>
</dbReference>
<dbReference type="InterPro" id="IPR044173">
    <property type="entry name" value="CASPL"/>
</dbReference>
<dbReference type="NCBIfam" id="TIGR01569">
    <property type="entry name" value="A_tha_TIGR01569"/>
    <property type="match status" value="1"/>
</dbReference>
<dbReference type="PANTHER" id="PTHR36488">
    <property type="entry name" value="CASP-LIKE PROTEIN 1U1"/>
    <property type="match status" value="1"/>
</dbReference>
<dbReference type="PANTHER" id="PTHR36488:SF8">
    <property type="entry name" value="CASP-LIKE PROTEIN 1U1"/>
    <property type="match status" value="1"/>
</dbReference>
<dbReference type="Pfam" id="PF04535">
    <property type="entry name" value="CASP_dom"/>
    <property type="match status" value="1"/>
</dbReference>
<sequence>MAKIKRIITTLVRLLVLGAALSATIVMVTSHDSAEVLNLSFDAKYTNARAFVYFAITNAIASGYSFIALFLSFSTPLWHLVFLLDVFMTLLLTSSISVALAIADVGKKGNSHAGWLPVCGQVPEFCDHVTGALIAGFSAAVLYLVLLLFSIHAVLNPKP</sequence>
<organism>
    <name type="scientific">Vitis vinifera</name>
    <name type="common">Grape</name>
    <dbReference type="NCBI Taxonomy" id="29760"/>
    <lineage>
        <taxon>Eukaryota</taxon>
        <taxon>Viridiplantae</taxon>
        <taxon>Streptophyta</taxon>
        <taxon>Embryophyta</taxon>
        <taxon>Tracheophyta</taxon>
        <taxon>Spermatophyta</taxon>
        <taxon>Magnoliopsida</taxon>
        <taxon>eudicotyledons</taxon>
        <taxon>Gunneridae</taxon>
        <taxon>Pentapetalae</taxon>
        <taxon>rosids</taxon>
        <taxon>Vitales</taxon>
        <taxon>Vitaceae</taxon>
        <taxon>Viteae</taxon>
        <taxon>Vitis</taxon>
    </lineage>
</organism>
<name>CSPLB_VITVI</name>
<keyword id="KW-1003">Cell membrane</keyword>
<keyword id="KW-0325">Glycoprotein</keyword>
<keyword id="KW-0472">Membrane</keyword>
<keyword id="KW-0812">Transmembrane</keyword>
<keyword id="KW-1133">Transmembrane helix</keyword>
<comment type="subunit">
    <text evidence="1">Homodimer and heterodimers.</text>
</comment>
<comment type="subcellular location">
    <subcellularLocation>
        <location evidence="1">Cell membrane</location>
        <topology evidence="1">Multi-pass membrane protein</topology>
    </subcellularLocation>
</comment>
<comment type="similarity">
    <text evidence="3">Belongs to the Casparian strip membrane proteins (CASP) family.</text>
</comment>
<feature type="chain" id="PRO_0000370311" description="CASP-like protein 1C1">
    <location>
        <begin position="1"/>
        <end position="159"/>
    </location>
</feature>
<feature type="topological domain" description="Cytoplasmic" evidence="2">
    <location>
        <begin position="1"/>
        <end position="6"/>
    </location>
</feature>
<feature type="transmembrane region" description="Helical" evidence="2">
    <location>
        <begin position="7"/>
        <end position="27"/>
    </location>
</feature>
<feature type="topological domain" description="Extracellular" evidence="2">
    <location>
        <begin position="28"/>
        <end position="50"/>
    </location>
</feature>
<feature type="transmembrane region" description="Helical" evidence="2">
    <location>
        <begin position="51"/>
        <end position="73"/>
    </location>
</feature>
<feature type="topological domain" description="Cytoplasmic" evidence="2">
    <location>
        <begin position="74"/>
        <end position="86"/>
    </location>
</feature>
<feature type="transmembrane region" description="Helical" evidence="2">
    <location>
        <begin position="87"/>
        <end position="107"/>
    </location>
</feature>
<feature type="topological domain" description="Extracellular" evidence="2">
    <location>
        <begin position="108"/>
        <end position="130"/>
    </location>
</feature>
<feature type="transmembrane region" description="Helical" evidence="2">
    <location>
        <begin position="131"/>
        <end position="151"/>
    </location>
</feature>
<feature type="topological domain" description="Cytoplasmic" evidence="2">
    <location>
        <begin position="152"/>
        <end position="159"/>
    </location>
</feature>
<feature type="glycosylation site" description="N-linked (GlcNAc...) asparagine" evidence="2">
    <location>
        <position position="38"/>
    </location>
</feature>
<proteinExistence type="inferred from homology"/>
<reference key="1">
    <citation type="journal article" date="2007" name="Nature">
        <title>The grapevine genome sequence suggests ancestral hexaploidization in major angiosperm phyla.</title>
        <authorList>
            <person name="Jaillon O."/>
            <person name="Aury J.-M."/>
            <person name="Noel B."/>
            <person name="Policriti A."/>
            <person name="Clepet C."/>
            <person name="Casagrande A."/>
            <person name="Choisne N."/>
            <person name="Aubourg S."/>
            <person name="Vitulo N."/>
            <person name="Jubin C."/>
            <person name="Vezzi A."/>
            <person name="Legeai F."/>
            <person name="Hugueney P."/>
            <person name="Dasilva C."/>
            <person name="Horner D."/>
            <person name="Mica E."/>
            <person name="Jublot D."/>
            <person name="Poulain J."/>
            <person name="Bruyere C."/>
            <person name="Billault A."/>
            <person name="Segurens B."/>
            <person name="Gouyvenoux M."/>
            <person name="Ugarte E."/>
            <person name="Cattonaro F."/>
            <person name="Anthouard V."/>
            <person name="Vico V."/>
            <person name="Del Fabbro C."/>
            <person name="Alaux M."/>
            <person name="Di Gaspero G."/>
            <person name="Dumas V."/>
            <person name="Felice N."/>
            <person name="Paillard S."/>
            <person name="Juman I."/>
            <person name="Moroldo M."/>
            <person name="Scalabrin S."/>
            <person name="Canaguier A."/>
            <person name="Le Clainche I."/>
            <person name="Malacrida G."/>
            <person name="Durand E."/>
            <person name="Pesole G."/>
            <person name="Laucou V."/>
            <person name="Chatelet P."/>
            <person name="Merdinoglu D."/>
            <person name="Delledonne M."/>
            <person name="Pezzotti M."/>
            <person name="Lecharny A."/>
            <person name="Scarpelli C."/>
            <person name="Artiguenave F."/>
            <person name="Pe M.E."/>
            <person name="Valle G."/>
            <person name="Morgante M."/>
            <person name="Caboche M."/>
            <person name="Adam-Blondon A.-F."/>
            <person name="Weissenbach J."/>
            <person name="Quetier F."/>
            <person name="Wincker P."/>
        </authorList>
    </citation>
    <scope>NUCLEOTIDE SEQUENCE [LARGE SCALE GENOMIC DNA]</scope>
    <source>
        <strain>cv. Pinot noir / PN40024</strain>
    </source>
</reference>
<reference key="2">
    <citation type="journal article" date="2014" name="Plant Physiol.">
        <title>Functional and evolutionary analysis of the CASPARIAN STRIP MEMBRANE DOMAIN PROTEIN family.</title>
        <authorList>
            <person name="Roppolo D."/>
            <person name="Boeckmann B."/>
            <person name="Pfister A."/>
            <person name="Boutet E."/>
            <person name="Rubio M.C."/>
            <person name="Denervaud-Tendon V."/>
            <person name="Vermeer J.E."/>
            <person name="Gheyselinck J."/>
            <person name="Xenarios I."/>
            <person name="Geldner N."/>
        </authorList>
    </citation>
    <scope>GENE FAMILY</scope>
    <scope>NOMENCLATURE</scope>
</reference>
<accession>A7R333</accession>